<comment type="function">
    <text evidence="1">Catalyzes the attachment of proline to tRNA(Pro) in a two-step reaction: proline is first activated by ATP to form Pro-AMP and then transferred to the acceptor end of tRNA(Pro). As ProRS can inadvertently accommodate and process non-cognate amino acids such as alanine and cysteine, to avoid such errors it has two additional distinct editing activities against alanine. One activity is designated as 'pretransfer' editing and involves the tRNA(Pro)-independent hydrolysis of activated Ala-AMP. The other activity is designated 'posttransfer' editing and involves deacylation of mischarged Ala-tRNA(Pro). The misacylated Cys-tRNA(Pro) is not edited by ProRS.</text>
</comment>
<comment type="catalytic activity">
    <reaction evidence="1">
        <text>tRNA(Pro) + L-proline + ATP = L-prolyl-tRNA(Pro) + AMP + diphosphate</text>
        <dbReference type="Rhea" id="RHEA:14305"/>
        <dbReference type="Rhea" id="RHEA-COMP:9700"/>
        <dbReference type="Rhea" id="RHEA-COMP:9702"/>
        <dbReference type="ChEBI" id="CHEBI:30616"/>
        <dbReference type="ChEBI" id="CHEBI:33019"/>
        <dbReference type="ChEBI" id="CHEBI:60039"/>
        <dbReference type="ChEBI" id="CHEBI:78442"/>
        <dbReference type="ChEBI" id="CHEBI:78532"/>
        <dbReference type="ChEBI" id="CHEBI:456215"/>
        <dbReference type="EC" id="6.1.1.15"/>
    </reaction>
</comment>
<comment type="subunit">
    <text evidence="1">Homodimer.</text>
</comment>
<comment type="subcellular location">
    <subcellularLocation>
        <location evidence="1">Cytoplasm</location>
    </subcellularLocation>
</comment>
<comment type="domain">
    <text evidence="1">Consists of three domains: the N-terminal catalytic domain, the editing domain and the C-terminal anticodon-binding domain.</text>
</comment>
<comment type="similarity">
    <text evidence="1">Belongs to the class-II aminoacyl-tRNA synthetase family. ProS type 1 subfamily.</text>
</comment>
<dbReference type="EC" id="6.1.1.15" evidence="1"/>
<dbReference type="EMBL" id="CP000529">
    <property type="protein sequence ID" value="ABM36064.1"/>
    <property type="molecule type" value="Genomic_DNA"/>
</dbReference>
<dbReference type="RefSeq" id="WP_011800159.1">
    <property type="nucleotide sequence ID" value="NC_008781.1"/>
</dbReference>
<dbReference type="SMR" id="A1VK86"/>
<dbReference type="STRING" id="365044.Pnap_0745"/>
<dbReference type="KEGG" id="pna:Pnap_0745"/>
<dbReference type="eggNOG" id="COG0442">
    <property type="taxonomic scope" value="Bacteria"/>
</dbReference>
<dbReference type="HOGENOM" id="CLU_016739_0_0_4"/>
<dbReference type="OrthoDB" id="9809052at2"/>
<dbReference type="Proteomes" id="UP000000644">
    <property type="component" value="Chromosome"/>
</dbReference>
<dbReference type="GO" id="GO:0005829">
    <property type="term" value="C:cytosol"/>
    <property type="evidence" value="ECO:0007669"/>
    <property type="project" value="TreeGrafter"/>
</dbReference>
<dbReference type="GO" id="GO:0002161">
    <property type="term" value="F:aminoacyl-tRNA deacylase activity"/>
    <property type="evidence" value="ECO:0007669"/>
    <property type="project" value="InterPro"/>
</dbReference>
<dbReference type="GO" id="GO:0005524">
    <property type="term" value="F:ATP binding"/>
    <property type="evidence" value="ECO:0007669"/>
    <property type="project" value="UniProtKB-UniRule"/>
</dbReference>
<dbReference type="GO" id="GO:0004827">
    <property type="term" value="F:proline-tRNA ligase activity"/>
    <property type="evidence" value="ECO:0007669"/>
    <property type="project" value="UniProtKB-UniRule"/>
</dbReference>
<dbReference type="GO" id="GO:0006433">
    <property type="term" value="P:prolyl-tRNA aminoacylation"/>
    <property type="evidence" value="ECO:0007669"/>
    <property type="project" value="UniProtKB-UniRule"/>
</dbReference>
<dbReference type="CDD" id="cd04334">
    <property type="entry name" value="ProRS-INS"/>
    <property type="match status" value="1"/>
</dbReference>
<dbReference type="CDD" id="cd00861">
    <property type="entry name" value="ProRS_anticodon_short"/>
    <property type="match status" value="1"/>
</dbReference>
<dbReference type="CDD" id="cd00779">
    <property type="entry name" value="ProRS_core_prok"/>
    <property type="match status" value="1"/>
</dbReference>
<dbReference type="FunFam" id="3.30.930.10:FF:000042">
    <property type="entry name" value="probable proline--tRNA ligase, mitochondrial"/>
    <property type="match status" value="1"/>
</dbReference>
<dbReference type="Gene3D" id="3.40.50.800">
    <property type="entry name" value="Anticodon-binding domain"/>
    <property type="match status" value="1"/>
</dbReference>
<dbReference type="Gene3D" id="3.30.930.10">
    <property type="entry name" value="Bira Bifunctional Protein, Domain 2"/>
    <property type="match status" value="2"/>
</dbReference>
<dbReference type="Gene3D" id="3.90.960.10">
    <property type="entry name" value="YbaK/aminoacyl-tRNA synthetase-associated domain"/>
    <property type="match status" value="1"/>
</dbReference>
<dbReference type="HAMAP" id="MF_01569">
    <property type="entry name" value="Pro_tRNA_synth_type1"/>
    <property type="match status" value="1"/>
</dbReference>
<dbReference type="InterPro" id="IPR002314">
    <property type="entry name" value="aa-tRNA-synt_IIb"/>
</dbReference>
<dbReference type="InterPro" id="IPR006195">
    <property type="entry name" value="aa-tRNA-synth_II"/>
</dbReference>
<dbReference type="InterPro" id="IPR045864">
    <property type="entry name" value="aa-tRNA-synth_II/BPL/LPL"/>
</dbReference>
<dbReference type="InterPro" id="IPR004154">
    <property type="entry name" value="Anticodon-bd"/>
</dbReference>
<dbReference type="InterPro" id="IPR036621">
    <property type="entry name" value="Anticodon-bd_dom_sf"/>
</dbReference>
<dbReference type="InterPro" id="IPR002316">
    <property type="entry name" value="Pro-tRNA-ligase_IIa"/>
</dbReference>
<dbReference type="InterPro" id="IPR004500">
    <property type="entry name" value="Pro-tRNA-synth_IIa_bac-type"/>
</dbReference>
<dbReference type="InterPro" id="IPR023717">
    <property type="entry name" value="Pro-tRNA-Synthase_IIa_type1"/>
</dbReference>
<dbReference type="InterPro" id="IPR050062">
    <property type="entry name" value="Pro-tRNA_synthetase"/>
</dbReference>
<dbReference type="InterPro" id="IPR044140">
    <property type="entry name" value="ProRS_anticodon_short"/>
</dbReference>
<dbReference type="InterPro" id="IPR033730">
    <property type="entry name" value="ProRS_core_prok"/>
</dbReference>
<dbReference type="InterPro" id="IPR036754">
    <property type="entry name" value="YbaK/aa-tRNA-synt-asso_dom_sf"/>
</dbReference>
<dbReference type="InterPro" id="IPR007214">
    <property type="entry name" value="YbaK/aa-tRNA-synth-assoc-dom"/>
</dbReference>
<dbReference type="NCBIfam" id="NF006625">
    <property type="entry name" value="PRK09194.1"/>
    <property type="match status" value="1"/>
</dbReference>
<dbReference type="NCBIfam" id="TIGR00409">
    <property type="entry name" value="proS_fam_II"/>
    <property type="match status" value="1"/>
</dbReference>
<dbReference type="PANTHER" id="PTHR42753">
    <property type="entry name" value="MITOCHONDRIAL RIBOSOME PROTEIN L39/PROLYL-TRNA LIGASE FAMILY MEMBER"/>
    <property type="match status" value="1"/>
</dbReference>
<dbReference type="PANTHER" id="PTHR42753:SF2">
    <property type="entry name" value="PROLINE--TRNA LIGASE"/>
    <property type="match status" value="1"/>
</dbReference>
<dbReference type="Pfam" id="PF03129">
    <property type="entry name" value="HGTP_anticodon"/>
    <property type="match status" value="1"/>
</dbReference>
<dbReference type="Pfam" id="PF00587">
    <property type="entry name" value="tRNA-synt_2b"/>
    <property type="match status" value="1"/>
</dbReference>
<dbReference type="Pfam" id="PF04073">
    <property type="entry name" value="tRNA_edit"/>
    <property type="match status" value="1"/>
</dbReference>
<dbReference type="PIRSF" id="PIRSF001535">
    <property type="entry name" value="ProRS_1"/>
    <property type="match status" value="1"/>
</dbReference>
<dbReference type="PRINTS" id="PR01046">
    <property type="entry name" value="TRNASYNTHPRO"/>
</dbReference>
<dbReference type="SUPFAM" id="SSF52954">
    <property type="entry name" value="Class II aaRS ABD-related"/>
    <property type="match status" value="1"/>
</dbReference>
<dbReference type="SUPFAM" id="SSF55681">
    <property type="entry name" value="Class II aaRS and biotin synthetases"/>
    <property type="match status" value="1"/>
</dbReference>
<dbReference type="SUPFAM" id="SSF55826">
    <property type="entry name" value="YbaK/ProRS associated domain"/>
    <property type="match status" value="1"/>
</dbReference>
<dbReference type="PROSITE" id="PS50862">
    <property type="entry name" value="AA_TRNA_LIGASE_II"/>
    <property type="match status" value="1"/>
</dbReference>
<name>SYP_POLNA</name>
<feature type="chain" id="PRO_0000288360" description="Proline--tRNA ligase">
    <location>
        <begin position="1"/>
        <end position="581"/>
    </location>
</feature>
<gene>
    <name evidence="1" type="primary">proS</name>
    <name type="ordered locus">Pnap_0745</name>
</gene>
<protein>
    <recommendedName>
        <fullName evidence="1">Proline--tRNA ligase</fullName>
        <ecNumber evidence="1">6.1.1.15</ecNumber>
    </recommendedName>
    <alternativeName>
        <fullName evidence="1">Prolyl-tRNA synthetase</fullName>
        <shortName evidence="1">ProRS</shortName>
    </alternativeName>
</protein>
<keyword id="KW-0030">Aminoacyl-tRNA synthetase</keyword>
<keyword id="KW-0067">ATP-binding</keyword>
<keyword id="KW-0963">Cytoplasm</keyword>
<keyword id="KW-0436">Ligase</keyword>
<keyword id="KW-0547">Nucleotide-binding</keyword>
<keyword id="KW-0648">Protein biosynthesis</keyword>
<keyword id="KW-1185">Reference proteome</keyword>
<proteinExistence type="inferred from homology"/>
<reference key="1">
    <citation type="journal article" date="2009" name="Environ. Microbiol.">
        <title>The genome of Polaromonas naphthalenivorans strain CJ2, isolated from coal tar-contaminated sediment, reveals physiological and metabolic versatility and evolution through extensive horizontal gene transfer.</title>
        <authorList>
            <person name="Yagi J.M."/>
            <person name="Sims D."/>
            <person name="Brettin T."/>
            <person name="Bruce D."/>
            <person name="Madsen E.L."/>
        </authorList>
    </citation>
    <scope>NUCLEOTIDE SEQUENCE [LARGE SCALE GENOMIC DNA]</scope>
    <source>
        <strain>CJ2</strain>
    </source>
</reference>
<accession>A1VK86</accession>
<sequence length="581" mass="63972">MKASQFFISTLKEAPADAEIVSHQLMMRAGLIKKLGAGIYNYMPMGLRVIRKVEAIVREEMNRAGAIEMSMPVIQPAELWQETGRFEAMGPELLRIKDRHGRDFVVQPTSEEVVTDVMRQDIRSYKQLPKNLYQIQTKFRDERRPRFGLMRGREFIMKDAYSFDRDQTAAKVSYQNMAEAYRRIFDRFGLTYRAVAADSGAIGGDLSEEFQVIAATGEDAIVYCPTSDYAANMEKAEALAPAGPRPEASQALAKTPTPGKATCADVAALLGIPLKTTVKSLVLATDLTNEAGEVVKTQVWLLLLRGDHDMNEIKVGKVPGLDASFRFASLAEIDDHFGCEPGYLGPLSLKKPVKLVVDREVAVMADWVCGANEADFHITGVNWSRDLPEPDLIADIRNVVAGDPSPDGKGLLAIERGIEVGHVFYLGTKYSRAMNATFLGENGKPQFLEMGCYGIGITRLPAAAIEQNHDERGIIWPDAIAPFTVVICPITPERFPDVKAAADKLYSELLGAGVDVILDDRGERPGAMFADWELIGVPHRVTIGDRGLKEGHIEYQHRRDTAASKVEAAAAFDFLKGKLAL</sequence>
<evidence type="ECO:0000255" key="1">
    <source>
        <dbReference type="HAMAP-Rule" id="MF_01569"/>
    </source>
</evidence>
<organism>
    <name type="scientific">Polaromonas naphthalenivorans (strain CJ2)</name>
    <dbReference type="NCBI Taxonomy" id="365044"/>
    <lineage>
        <taxon>Bacteria</taxon>
        <taxon>Pseudomonadati</taxon>
        <taxon>Pseudomonadota</taxon>
        <taxon>Betaproteobacteria</taxon>
        <taxon>Burkholderiales</taxon>
        <taxon>Comamonadaceae</taxon>
        <taxon>Polaromonas</taxon>
    </lineage>
</organism>